<name>Y695_THESQ</name>
<feature type="chain" id="PRO_1000091269" description="UPF0102 protein TRQ2_0695">
    <location>
        <begin position="1"/>
        <end position="108"/>
    </location>
</feature>
<gene>
    <name type="ordered locus">TRQ2_0695</name>
</gene>
<sequence length="108" mass="12650">MMDWKEAEELACKFLKKKGYKILERNYRTKYGEIDIVARDGREIVFVEVKSGSGKVDPLERIDLKKVRNLEQTARFYMIQNKLKGPARVDFVRVTPEGIDHFEGIWLG</sequence>
<reference key="1">
    <citation type="journal article" date="2011" name="J. Bacteriol.">
        <title>Genome sequence of Thermotoga sp. strain RQ2, a hyperthermophilic bacterium isolated from a geothermally heated region of the seafloor near Ribeira Quente, the Azores.</title>
        <authorList>
            <person name="Swithers K.S."/>
            <person name="DiPippo J.L."/>
            <person name="Bruce D.C."/>
            <person name="Detter C."/>
            <person name="Tapia R."/>
            <person name="Han S."/>
            <person name="Saunders E."/>
            <person name="Goodwin L.A."/>
            <person name="Han J."/>
            <person name="Woyke T."/>
            <person name="Pitluck S."/>
            <person name="Pennacchio L."/>
            <person name="Nolan M."/>
            <person name="Mikhailova N."/>
            <person name="Lykidis A."/>
            <person name="Land M.L."/>
            <person name="Brettin T."/>
            <person name="Stetter K.O."/>
            <person name="Nelson K.E."/>
            <person name="Gogarten J.P."/>
            <person name="Noll K.M."/>
        </authorList>
    </citation>
    <scope>NUCLEOTIDE SEQUENCE [LARGE SCALE GENOMIC DNA]</scope>
    <source>
        <strain>RQ2</strain>
    </source>
</reference>
<accession>B1L9Q0</accession>
<protein>
    <recommendedName>
        <fullName evidence="1">UPF0102 protein TRQ2_0695</fullName>
    </recommendedName>
</protein>
<proteinExistence type="inferred from homology"/>
<dbReference type="EMBL" id="CP000969">
    <property type="protein sequence ID" value="ACB09048.1"/>
    <property type="molecule type" value="Genomic_DNA"/>
</dbReference>
<dbReference type="RefSeq" id="WP_004082957.1">
    <property type="nucleotide sequence ID" value="NC_010483.1"/>
</dbReference>
<dbReference type="SMR" id="B1L9Q0"/>
<dbReference type="KEGG" id="trq:TRQ2_0695"/>
<dbReference type="HOGENOM" id="CLU_115353_3_1_0"/>
<dbReference type="Proteomes" id="UP000001687">
    <property type="component" value="Chromosome"/>
</dbReference>
<dbReference type="GO" id="GO:0003676">
    <property type="term" value="F:nucleic acid binding"/>
    <property type="evidence" value="ECO:0007669"/>
    <property type="project" value="InterPro"/>
</dbReference>
<dbReference type="CDD" id="cd20736">
    <property type="entry name" value="PoNe_Nuclease"/>
    <property type="match status" value="1"/>
</dbReference>
<dbReference type="Gene3D" id="3.40.1350.10">
    <property type="match status" value="1"/>
</dbReference>
<dbReference type="HAMAP" id="MF_00048">
    <property type="entry name" value="UPF0102"/>
    <property type="match status" value="1"/>
</dbReference>
<dbReference type="InterPro" id="IPR011335">
    <property type="entry name" value="Restrct_endonuc-II-like"/>
</dbReference>
<dbReference type="InterPro" id="IPR011856">
    <property type="entry name" value="tRNA_endonuc-like_dom_sf"/>
</dbReference>
<dbReference type="InterPro" id="IPR003509">
    <property type="entry name" value="UPF0102_YraN-like"/>
</dbReference>
<dbReference type="NCBIfam" id="NF011270">
    <property type="entry name" value="PRK14677.1"/>
    <property type="match status" value="1"/>
</dbReference>
<dbReference type="PANTHER" id="PTHR34039">
    <property type="entry name" value="UPF0102 PROTEIN YRAN"/>
    <property type="match status" value="1"/>
</dbReference>
<dbReference type="PANTHER" id="PTHR34039:SF1">
    <property type="entry name" value="UPF0102 PROTEIN YRAN"/>
    <property type="match status" value="1"/>
</dbReference>
<dbReference type="Pfam" id="PF02021">
    <property type="entry name" value="UPF0102"/>
    <property type="match status" value="1"/>
</dbReference>
<dbReference type="SUPFAM" id="SSF52980">
    <property type="entry name" value="Restriction endonuclease-like"/>
    <property type="match status" value="1"/>
</dbReference>
<organism>
    <name type="scientific">Thermotoga sp. (strain RQ2)</name>
    <dbReference type="NCBI Taxonomy" id="126740"/>
    <lineage>
        <taxon>Bacteria</taxon>
        <taxon>Thermotogati</taxon>
        <taxon>Thermotogota</taxon>
        <taxon>Thermotogae</taxon>
        <taxon>Thermotogales</taxon>
        <taxon>Thermotogaceae</taxon>
        <taxon>Thermotoga</taxon>
    </lineage>
</organism>
<comment type="similarity">
    <text evidence="1">Belongs to the UPF0102 family.</text>
</comment>
<evidence type="ECO:0000255" key="1">
    <source>
        <dbReference type="HAMAP-Rule" id="MF_00048"/>
    </source>
</evidence>